<dbReference type="EC" id="2.3.1.274" evidence="1"/>
<dbReference type="EMBL" id="AE017194">
    <property type="protein sequence ID" value="AAS42800.1"/>
    <property type="molecule type" value="Genomic_DNA"/>
</dbReference>
<dbReference type="SMR" id="Q732L7"/>
<dbReference type="KEGG" id="bca:BCE_3895"/>
<dbReference type="HOGENOM" id="CLU_039379_1_1_9"/>
<dbReference type="UniPathway" id="UPA00085"/>
<dbReference type="Proteomes" id="UP000002527">
    <property type="component" value="Chromosome"/>
</dbReference>
<dbReference type="GO" id="GO:0005737">
    <property type="term" value="C:cytoplasm"/>
    <property type="evidence" value="ECO:0007669"/>
    <property type="project" value="UniProtKB-SubCell"/>
</dbReference>
<dbReference type="GO" id="GO:0043811">
    <property type="term" value="F:phosphate:acyl-[acyl carrier protein] acyltransferase activity"/>
    <property type="evidence" value="ECO:0007669"/>
    <property type="project" value="UniProtKB-UniRule"/>
</dbReference>
<dbReference type="GO" id="GO:0006633">
    <property type="term" value="P:fatty acid biosynthetic process"/>
    <property type="evidence" value="ECO:0007669"/>
    <property type="project" value="UniProtKB-UniRule"/>
</dbReference>
<dbReference type="GO" id="GO:0008654">
    <property type="term" value="P:phospholipid biosynthetic process"/>
    <property type="evidence" value="ECO:0007669"/>
    <property type="project" value="UniProtKB-KW"/>
</dbReference>
<dbReference type="Gene3D" id="3.40.718.10">
    <property type="entry name" value="Isopropylmalate Dehydrogenase"/>
    <property type="match status" value="1"/>
</dbReference>
<dbReference type="HAMAP" id="MF_00019">
    <property type="entry name" value="PlsX"/>
    <property type="match status" value="1"/>
</dbReference>
<dbReference type="InterPro" id="IPR003664">
    <property type="entry name" value="FA_synthesis"/>
</dbReference>
<dbReference type="InterPro" id="IPR012281">
    <property type="entry name" value="Phospholipid_synth_PlsX-like"/>
</dbReference>
<dbReference type="NCBIfam" id="TIGR00182">
    <property type="entry name" value="plsX"/>
    <property type="match status" value="1"/>
</dbReference>
<dbReference type="PANTHER" id="PTHR30100">
    <property type="entry name" value="FATTY ACID/PHOSPHOLIPID SYNTHESIS PROTEIN PLSX"/>
    <property type="match status" value="1"/>
</dbReference>
<dbReference type="PANTHER" id="PTHR30100:SF1">
    <property type="entry name" value="PHOSPHATE ACYLTRANSFERASE"/>
    <property type="match status" value="1"/>
</dbReference>
<dbReference type="Pfam" id="PF02504">
    <property type="entry name" value="FA_synthesis"/>
    <property type="match status" value="1"/>
</dbReference>
<dbReference type="PIRSF" id="PIRSF002465">
    <property type="entry name" value="Phsphlp_syn_PlsX"/>
    <property type="match status" value="1"/>
</dbReference>
<dbReference type="SUPFAM" id="SSF53659">
    <property type="entry name" value="Isocitrate/Isopropylmalate dehydrogenase-like"/>
    <property type="match status" value="1"/>
</dbReference>
<gene>
    <name evidence="1" type="primary">plsX</name>
    <name type="ordered locus">BCE_3895</name>
</gene>
<protein>
    <recommendedName>
        <fullName evidence="1">Phosphate acyltransferase</fullName>
        <ecNumber evidence="1">2.3.1.274</ecNumber>
    </recommendedName>
    <alternativeName>
        <fullName evidence="1">Acyl-ACP phosphotransacylase</fullName>
    </alternativeName>
    <alternativeName>
        <fullName evidence="1">Acyl-[acyl-carrier-protein]--phosphate acyltransferase</fullName>
    </alternativeName>
    <alternativeName>
        <fullName evidence="1">Phosphate-acyl-ACP acyltransferase</fullName>
    </alternativeName>
</protein>
<proteinExistence type="inferred from homology"/>
<feature type="chain" id="PRO_0000189840" description="Phosphate acyltransferase">
    <location>
        <begin position="1"/>
        <end position="330"/>
    </location>
</feature>
<name>PLSX_BACC1</name>
<accession>Q732L7</accession>
<organism>
    <name type="scientific">Bacillus cereus (strain ATCC 10987 / NRS 248)</name>
    <dbReference type="NCBI Taxonomy" id="222523"/>
    <lineage>
        <taxon>Bacteria</taxon>
        <taxon>Bacillati</taxon>
        <taxon>Bacillota</taxon>
        <taxon>Bacilli</taxon>
        <taxon>Bacillales</taxon>
        <taxon>Bacillaceae</taxon>
        <taxon>Bacillus</taxon>
        <taxon>Bacillus cereus group</taxon>
    </lineage>
</organism>
<evidence type="ECO:0000255" key="1">
    <source>
        <dbReference type="HAMAP-Rule" id="MF_00019"/>
    </source>
</evidence>
<comment type="function">
    <text evidence="1">Catalyzes the reversible formation of acyl-phosphate (acyl-PO(4)) from acyl-[acyl-carrier-protein] (acyl-ACP). This enzyme utilizes acyl-ACP as fatty acyl donor, but not acyl-CoA.</text>
</comment>
<comment type="catalytic activity">
    <reaction evidence="1">
        <text>a fatty acyl-[ACP] + phosphate = an acyl phosphate + holo-[ACP]</text>
        <dbReference type="Rhea" id="RHEA:42292"/>
        <dbReference type="Rhea" id="RHEA-COMP:9685"/>
        <dbReference type="Rhea" id="RHEA-COMP:14125"/>
        <dbReference type="ChEBI" id="CHEBI:43474"/>
        <dbReference type="ChEBI" id="CHEBI:59918"/>
        <dbReference type="ChEBI" id="CHEBI:64479"/>
        <dbReference type="ChEBI" id="CHEBI:138651"/>
        <dbReference type="EC" id="2.3.1.274"/>
    </reaction>
</comment>
<comment type="pathway">
    <text evidence="1">Lipid metabolism; phospholipid metabolism.</text>
</comment>
<comment type="subunit">
    <text evidence="1">Homodimer. Probably interacts with PlsY.</text>
</comment>
<comment type="subcellular location">
    <subcellularLocation>
        <location evidence="1">Cytoplasm</location>
    </subcellularLocation>
    <text evidence="1">Associated with the membrane possibly through PlsY.</text>
</comment>
<comment type="similarity">
    <text evidence="1">Belongs to the PlsX family.</text>
</comment>
<keyword id="KW-0963">Cytoplasm</keyword>
<keyword id="KW-0444">Lipid biosynthesis</keyword>
<keyword id="KW-0443">Lipid metabolism</keyword>
<keyword id="KW-0594">Phospholipid biosynthesis</keyword>
<keyword id="KW-1208">Phospholipid metabolism</keyword>
<keyword id="KW-0808">Transferase</keyword>
<sequence>MKIAIDAMGGDHAPKAVVLGAMKAIKEYSDLHITLVGKEEEIRQYLTSEERITILHTDEKIESTDEPVRAVRRKKQASMVLAAQQVKDGVADACISAGSTGALMAAGLFVVGRMEGIERPALSPTMPTVDGEGFVMLDVGANVDAKPIHLYQYAVMGSVYAEKVRGIKNPRVGLLNVGTEDGKGNELSKQVFAMLKDAPINFVGNVESRDLLQGVADVVVCDGFTGNVALKSLEGTALALFSMLKEQLMSSFTSKLAAAVLKPKLMVLKDKMDYSEYGGAALFGLKAPVIKAHGSSNDQSIFSAIRQTREMVAKEVIPTISSVMEKEPLQ</sequence>
<reference key="1">
    <citation type="journal article" date="2004" name="Nucleic Acids Res.">
        <title>The genome sequence of Bacillus cereus ATCC 10987 reveals metabolic adaptations and a large plasmid related to Bacillus anthracis pXO1.</title>
        <authorList>
            <person name="Rasko D.A."/>
            <person name="Ravel J."/>
            <person name="Oekstad O.A."/>
            <person name="Helgason E."/>
            <person name="Cer R.Z."/>
            <person name="Jiang L."/>
            <person name="Shores K.A."/>
            <person name="Fouts D.E."/>
            <person name="Tourasse N.J."/>
            <person name="Angiuoli S.V."/>
            <person name="Kolonay J.F."/>
            <person name="Nelson W.C."/>
            <person name="Kolstoe A.-B."/>
            <person name="Fraser C.M."/>
            <person name="Read T.D."/>
        </authorList>
    </citation>
    <scope>NUCLEOTIDE SEQUENCE [LARGE SCALE GENOMIC DNA]</scope>
    <source>
        <strain>ATCC 10987 / NRS 248</strain>
    </source>
</reference>